<name>FLAB_VIBCH</name>
<organism>
    <name type="scientific">Vibrio cholerae serotype O1 (strain ATCC 39315 / El Tor Inaba N16961)</name>
    <dbReference type="NCBI Taxonomy" id="243277"/>
    <lineage>
        <taxon>Bacteria</taxon>
        <taxon>Pseudomonadati</taxon>
        <taxon>Pseudomonadota</taxon>
        <taxon>Gammaproteobacteria</taxon>
        <taxon>Vibrionales</taxon>
        <taxon>Vibrionaceae</taxon>
        <taxon>Vibrio</taxon>
    </lineage>
</organism>
<feature type="chain" id="PRO_0000182649" description="Flagellin B">
    <location>
        <begin position="1"/>
        <end position="376"/>
    </location>
</feature>
<feature type="coiled-coil region" evidence="2">
    <location>
        <begin position="103"/>
        <end position="129"/>
    </location>
</feature>
<proteinExistence type="inferred from homology"/>
<dbReference type="EMBL" id="AE003852">
    <property type="protein sequence ID" value="AAF95287.1"/>
    <property type="molecule type" value="Genomic_DNA"/>
</dbReference>
<dbReference type="PIR" id="A82112">
    <property type="entry name" value="A82112"/>
</dbReference>
<dbReference type="RefSeq" id="NP_231773.1">
    <property type="nucleotide sequence ID" value="NC_002505.1"/>
</dbReference>
<dbReference type="RefSeq" id="WP_000996996.1">
    <property type="nucleotide sequence ID" value="NZ_LT906614.1"/>
</dbReference>
<dbReference type="SMR" id="P0C6C4"/>
<dbReference type="STRING" id="243277.VC_2142"/>
<dbReference type="DNASU" id="2613278"/>
<dbReference type="EnsemblBacteria" id="AAF95287">
    <property type="protein sequence ID" value="AAF95287"/>
    <property type="gene ID" value="VC_2142"/>
</dbReference>
<dbReference type="KEGG" id="vch:VC_2142"/>
<dbReference type="PATRIC" id="fig|243277.26.peg.2047"/>
<dbReference type="eggNOG" id="COG1344">
    <property type="taxonomic scope" value="Bacteria"/>
</dbReference>
<dbReference type="HOGENOM" id="CLU_011142_7_2_6"/>
<dbReference type="Proteomes" id="UP000000584">
    <property type="component" value="Chromosome 1"/>
</dbReference>
<dbReference type="GO" id="GO:0009288">
    <property type="term" value="C:bacterial-type flagellum"/>
    <property type="evidence" value="ECO:0007669"/>
    <property type="project" value="UniProtKB-SubCell"/>
</dbReference>
<dbReference type="GO" id="GO:0005576">
    <property type="term" value="C:extracellular region"/>
    <property type="evidence" value="ECO:0007669"/>
    <property type="project" value="UniProtKB-SubCell"/>
</dbReference>
<dbReference type="GO" id="GO:0005198">
    <property type="term" value="F:structural molecule activity"/>
    <property type="evidence" value="ECO:0007669"/>
    <property type="project" value="InterPro"/>
</dbReference>
<dbReference type="FunFam" id="1.20.1330.10:FF:000002">
    <property type="entry name" value="Flagellin"/>
    <property type="match status" value="1"/>
</dbReference>
<dbReference type="Gene3D" id="3.30.70.2120">
    <property type="match status" value="1"/>
</dbReference>
<dbReference type="Gene3D" id="1.20.1330.10">
    <property type="entry name" value="f41 fragment of flagellin, N-terminal domain"/>
    <property type="match status" value="1"/>
</dbReference>
<dbReference type="Gene3D" id="6.10.10.10">
    <property type="entry name" value="Flagellar export chaperone, C-terminal domain"/>
    <property type="match status" value="1"/>
</dbReference>
<dbReference type="InterPro" id="IPR001492">
    <property type="entry name" value="Flagellin"/>
</dbReference>
<dbReference type="InterPro" id="IPR046358">
    <property type="entry name" value="Flagellin_C"/>
</dbReference>
<dbReference type="InterPro" id="IPR042187">
    <property type="entry name" value="Flagellin_C_sub2"/>
</dbReference>
<dbReference type="InterPro" id="IPR010810">
    <property type="entry name" value="Flagellin_hook_IN_motif"/>
</dbReference>
<dbReference type="InterPro" id="IPR001029">
    <property type="entry name" value="Flagellin_N"/>
</dbReference>
<dbReference type="NCBIfam" id="NF006466">
    <property type="entry name" value="PRK08869.1-1"/>
    <property type="match status" value="1"/>
</dbReference>
<dbReference type="NCBIfam" id="NF006468">
    <property type="entry name" value="PRK08869.1-3"/>
    <property type="match status" value="1"/>
</dbReference>
<dbReference type="PANTHER" id="PTHR42792">
    <property type="entry name" value="FLAGELLIN"/>
    <property type="match status" value="1"/>
</dbReference>
<dbReference type="PANTHER" id="PTHR42792:SF2">
    <property type="entry name" value="FLAGELLIN"/>
    <property type="match status" value="1"/>
</dbReference>
<dbReference type="Pfam" id="PF00700">
    <property type="entry name" value="Flagellin_C"/>
    <property type="match status" value="1"/>
</dbReference>
<dbReference type="Pfam" id="PF07196">
    <property type="entry name" value="Flagellin_IN"/>
    <property type="match status" value="1"/>
</dbReference>
<dbReference type="Pfam" id="PF00669">
    <property type="entry name" value="Flagellin_N"/>
    <property type="match status" value="1"/>
</dbReference>
<dbReference type="PRINTS" id="PR00207">
    <property type="entry name" value="FLAGELLIN"/>
</dbReference>
<dbReference type="SUPFAM" id="SSF64518">
    <property type="entry name" value="Phase 1 flagellin"/>
    <property type="match status" value="1"/>
</dbReference>
<sequence length="376" mass="39517">MAINVNTNVSAMTAQRYLNGAADGMQKSMERLSSGYKINSARDDAAGLQISNRLTSQSRGLDMAVKNANDGISIAQTAEGAMNETTNILQRMRDLALQSSNGSNSSSERRAIQEEVSALNDELNRIAETTSFGGNKLLNGSFGSKSFQIGADSGEAVMLSMGSMRSDTQAMGGKSYRAQEGKAADWRVGAATDLTLSYTNKQGEAREVTINAKQGDDLEELATYINGQTEDVKASVGEDGKLQLFASSQKVNGDVTIGGGLGGEIGFDAGRNVTVADVNVSTVAGSQEAVSILDGALKAVDSQRASLGAFQNRFGHAISNLDNVNENVNASRSRIRDTDYARETTAMTKAQILQQASTSVLAQAKQSPSAALSLLG</sequence>
<comment type="function">
    <text evidence="1">Flagellin is the subunit protein which polymerizes to form the filaments of bacterial flagella. FlaB is not essential for flagellar synthesis and motility (By similarity).</text>
</comment>
<comment type="subunit">
    <text evidence="1">Heteromer of multiple flagellin subunits including FlaA, FlaB, FlaC, FlaD and FlaE.</text>
</comment>
<comment type="subcellular location">
    <subcellularLocation>
        <location evidence="1">Secreted</location>
    </subcellularLocation>
    <subcellularLocation>
        <location evidence="1">Bacterial flagellum</location>
    </subcellularLocation>
</comment>
<comment type="miscellaneous">
    <text>V.cholerae is able to differentially regulate the flagellins within the flagellum maybe to produce flagella which are particularly suited for motility within a given environment.</text>
</comment>
<comment type="similarity">
    <text evidence="3">Belongs to the bacterial flagellin family.</text>
</comment>
<accession>P0C6C4</accession>
<accession>O34223</accession>
<keyword id="KW-0975">Bacterial flagellum</keyword>
<keyword id="KW-0175">Coiled coil</keyword>
<keyword id="KW-1185">Reference proteome</keyword>
<keyword id="KW-0964">Secreted</keyword>
<protein>
    <recommendedName>
        <fullName>Flagellin B</fullName>
    </recommendedName>
</protein>
<evidence type="ECO:0000250" key="1"/>
<evidence type="ECO:0000255" key="2"/>
<evidence type="ECO:0000305" key="3"/>
<reference key="1">
    <citation type="journal article" date="2000" name="Nature">
        <title>DNA sequence of both chromosomes of the cholera pathogen Vibrio cholerae.</title>
        <authorList>
            <person name="Heidelberg J.F."/>
            <person name="Eisen J.A."/>
            <person name="Nelson W.C."/>
            <person name="Clayton R.A."/>
            <person name="Gwinn M.L."/>
            <person name="Dodson R.J."/>
            <person name="Haft D.H."/>
            <person name="Hickey E.K."/>
            <person name="Peterson J.D."/>
            <person name="Umayam L.A."/>
            <person name="Gill S.R."/>
            <person name="Nelson K.E."/>
            <person name="Read T.D."/>
            <person name="Tettelin H."/>
            <person name="Richardson D.L."/>
            <person name="Ermolaeva M.D."/>
            <person name="Vamathevan J.J."/>
            <person name="Bass S."/>
            <person name="Qin H."/>
            <person name="Dragoi I."/>
            <person name="Sellers P."/>
            <person name="McDonald L.A."/>
            <person name="Utterback T.R."/>
            <person name="Fleischmann R.D."/>
            <person name="Nierman W.C."/>
            <person name="White O."/>
            <person name="Salzberg S.L."/>
            <person name="Smith H.O."/>
            <person name="Colwell R.R."/>
            <person name="Mekalanos J.J."/>
            <person name="Venter J.C."/>
            <person name="Fraser C.M."/>
        </authorList>
    </citation>
    <scope>NUCLEOTIDE SEQUENCE [LARGE SCALE GENOMIC DNA]</scope>
    <source>
        <strain>ATCC 39315 / El Tor Inaba N16961</strain>
    </source>
</reference>
<gene>
    <name type="primary">flaB</name>
    <name type="ordered locus">VC_2142</name>
</gene>